<gene>
    <name evidence="1" type="primary">argS</name>
    <name type="ordered locus">MADE_1006385</name>
</gene>
<accession>B4RU34</accession>
<accession>F2G4W5</accession>
<feature type="chain" id="PRO_1000095331" description="Arginine--tRNA ligase">
    <location>
        <begin position="1"/>
        <end position="576"/>
    </location>
</feature>
<feature type="short sequence motif" description="'HIGH' region">
    <location>
        <begin position="121"/>
        <end position="131"/>
    </location>
</feature>
<protein>
    <recommendedName>
        <fullName evidence="1">Arginine--tRNA ligase</fullName>
        <ecNumber evidence="1">6.1.1.19</ecNumber>
    </recommendedName>
    <alternativeName>
        <fullName evidence="1">Arginyl-tRNA synthetase</fullName>
        <shortName evidence="1">ArgRS</shortName>
    </alternativeName>
</protein>
<reference key="1">
    <citation type="journal article" date="2008" name="ISME J.">
        <title>Comparative genomics of two ecotypes of the marine planktonic copiotroph Alteromonas macleodii suggests alternative lifestyles associated with different kinds of particulate organic matter.</title>
        <authorList>
            <person name="Ivars-Martinez E."/>
            <person name="Martin-Cuadrado A.-B."/>
            <person name="D'Auria G."/>
            <person name="Mira A."/>
            <person name="Ferriera S."/>
            <person name="Johnson J."/>
            <person name="Friedman R."/>
            <person name="Rodriguez-Valera F."/>
        </authorList>
    </citation>
    <scope>NUCLEOTIDE SEQUENCE [LARGE SCALE GENOMIC DNA]</scope>
    <source>
        <strain>DSM 17117 / CIP 110805 / LMG 28347 / Deep ecotype</strain>
    </source>
</reference>
<dbReference type="EC" id="6.1.1.19" evidence="1"/>
<dbReference type="EMBL" id="CP001103">
    <property type="protein sequence ID" value="AEA97419.1"/>
    <property type="molecule type" value="Genomic_DNA"/>
</dbReference>
<dbReference type="RefSeq" id="WP_012517761.1">
    <property type="nucleotide sequence ID" value="NC_011138.3"/>
</dbReference>
<dbReference type="SMR" id="B4RU34"/>
<dbReference type="KEGG" id="amc:MADE_1006385"/>
<dbReference type="HOGENOM" id="CLU_006406_5_1_6"/>
<dbReference type="Proteomes" id="UP000001870">
    <property type="component" value="Chromosome"/>
</dbReference>
<dbReference type="GO" id="GO:0005737">
    <property type="term" value="C:cytoplasm"/>
    <property type="evidence" value="ECO:0007669"/>
    <property type="project" value="UniProtKB-SubCell"/>
</dbReference>
<dbReference type="GO" id="GO:0004814">
    <property type="term" value="F:arginine-tRNA ligase activity"/>
    <property type="evidence" value="ECO:0007669"/>
    <property type="project" value="UniProtKB-UniRule"/>
</dbReference>
<dbReference type="GO" id="GO:0005524">
    <property type="term" value="F:ATP binding"/>
    <property type="evidence" value="ECO:0007669"/>
    <property type="project" value="UniProtKB-UniRule"/>
</dbReference>
<dbReference type="GO" id="GO:0006420">
    <property type="term" value="P:arginyl-tRNA aminoacylation"/>
    <property type="evidence" value="ECO:0007669"/>
    <property type="project" value="UniProtKB-UniRule"/>
</dbReference>
<dbReference type="CDD" id="cd07956">
    <property type="entry name" value="Anticodon_Ia_Arg"/>
    <property type="match status" value="1"/>
</dbReference>
<dbReference type="CDD" id="cd00671">
    <property type="entry name" value="ArgRS_core"/>
    <property type="match status" value="1"/>
</dbReference>
<dbReference type="FunFam" id="3.40.50.620:FF:000030">
    <property type="entry name" value="Arginine--tRNA ligase"/>
    <property type="match status" value="1"/>
</dbReference>
<dbReference type="FunFam" id="1.10.730.10:FF:000006">
    <property type="entry name" value="Arginyl-tRNA synthetase 2, mitochondrial"/>
    <property type="match status" value="1"/>
</dbReference>
<dbReference type="Gene3D" id="3.30.1360.70">
    <property type="entry name" value="Arginyl tRNA synthetase N-terminal domain"/>
    <property type="match status" value="1"/>
</dbReference>
<dbReference type="Gene3D" id="3.40.50.620">
    <property type="entry name" value="HUPs"/>
    <property type="match status" value="1"/>
</dbReference>
<dbReference type="Gene3D" id="1.10.730.10">
    <property type="entry name" value="Isoleucyl-tRNA Synthetase, Domain 1"/>
    <property type="match status" value="1"/>
</dbReference>
<dbReference type="HAMAP" id="MF_00123">
    <property type="entry name" value="Arg_tRNA_synth"/>
    <property type="match status" value="1"/>
</dbReference>
<dbReference type="InterPro" id="IPR001412">
    <property type="entry name" value="aa-tRNA-synth_I_CS"/>
</dbReference>
<dbReference type="InterPro" id="IPR001278">
    <property type="entry name" value="Arg-tRNA-ligase"/>
</dbReference>
<dbReference type="InterPro" id="IPR005148">
    <property type="entry name" value="Arg-tRNA-synth_N"/>
</dbReference>
<dbReference type="InterPro" id="IPR036695">
    <property type="entry name" value="Arg-tRNA-synth_N_sf"/>
</dbReference>
<dbReference type="InterPro" id="IPR035684">
    <property type="entry name" value="ArgRS_core"/>
</dbReference>
<dbReference type="InterPro" id="IPR008909">
    <property type="entry name" value="DALR_anticod-bd"/>
</dbReference>
<dbReference type="InterPro" id="IPR014729">
    <property type="entry name" value="Rossmann-like_a/b/a_fold"/>
</dbReference>
<dbReference type="InterPro" id="IPR009080">
    <property type="entry name" value="tRNAsynth_Ia_anticodon-bd"/>
</dbReference>
<dbReference type="NCBIfam" id="TIGR00456">
    <property type="entry name" value="argS"/>
    <property type="match status" value="1"/>
</dbReference>
<dbReference type="PANTHER" id="PTHR11956:SF5">
    <property type="entry name" value="ARGININE--TRNA LIGASE, CYTOPLASMIC"/>
    <property type="match status" value="1"/>
</dbReference>
<dbReference type="PANTHER" id="PTHR11956">
    <property type="entry name" value="ARGINYL-TRNA SYNTHETASE"/>
    <property type="match status" value="1"/>
</dbReference>
<dbReference type="Pfam" id="PF03485">
    <property type="entry name" value="Arg_tRNA_synt_N"/>
    <property type="match status" value="1"/>
</dbReference>
<dbReference type="Pfam" id="PF05746">
    <property type="entry name" value="DALR_1"/>
    <property type="match status" value="1"/>
</dbReference>
<dbReference type="Pfam" id="PF00750">
    <property type="entry name" value="tRNA-synt_1d"/>
    <property type="match status" value="1"/>
</dbReference>
<dbReference type="PRINTS" id="PR01038">
    <property type="entry name" value="TRNASYNTHARG"/>
</dbReference>
<dbReference type="SMART" id="SM01016">
    <property type="entry name" value="Arg_tRNA_synt_N"/>
    <property type="match status" value="1"/>
</dbReference>
<dbReference type="SMART" id="SM00836">
    <property type="entry name" value="DALR_1"/>
    <property type="match status" value="1"/>
</dbReference>
<dbReference type="SUPFAM" id="SSF47323">
    <property type="entry name" value="Anticodon-binding domain of a subclass of class I aminoacyl-tRNA synthetases"/>
    <property type="match status" value="1"/>
</dbReference>
<dbReference type="SUPFAM" id="SSF55190">
    <property type="entry name" value="Arginyl-tRNA synthetase (ArgRS), N-terminal 'additional' domain"/>
    <property type="match status" value="1"/>
</dbReference>
<dbReference type="SUPFAM" id="SSF52374">
    <property type="entry name" value="Nucleotidylyl transferase"/>
    <property type="match status" value="1"/>
</dbReference>
<dbReference type="PROSITE" id="PS00178">
    <property type="entry name" value="AA_TRNA_LIGASE_I"/>
    <property type="match status" value="1"/>
</dbReference>
<organism>
    <name type="scientific">Alteromonas mediterranea (strain DSM 17117 / CIP 110805 / LMG 28347 / Deep ecotype)</name>
    <dbReference type="NCBI Taxonomy" id="1774373"/>
    <lineage>
        <taxon>Bacteria</taxon>
        <taxon>Pseudomonadati</taxon>
        <taxon>Pseudomonadota</taxon>
        <taxon>Gammaproteobacteria</taxon>
        <taxon>Alteromonadales</taxon>
        <taxon>Alteromonadaceae</taxon>
        <taxon>Alteromonas/Salinimonas group</taxon>
        <taxon>Alteromonas</taxon>
    </lineage>
</organism>
<sequence>MNIHALLVNRFTEALQEMGVENAPVPVSRSARPEFGEYQFNGAMALAKQLKQKPRDIAEKIVETVKLDDIASKLEVAGPGFINVHLNDAWLANQCELSLTDPRLGIAKSPEQNIVVDYSSPNLAKEMHVGHLRTTIIGDAVVKVLEFLGHNVIRQNHMGDWGTQFGMLLAHLSDKLQEEVAETALSDLEDFYREAKVRFDEEEGFADRAREYVVKLQGGDAQCLALWEKFIDVSITHSEEVYDKLNVSLTRKDIMGESAYNDDLANVISDLKTKGLAVEDQGAQVVFIPELADKEGNPAVYIVQKSGGGYLYATTDLAAMRYRSGKLNADRTLILTDARQALHFKQTEIVGRKAGFMKEEQTYEHCPFGMMLGSDGKPFKTRTGGTVKLVELLDEAVERAGKLIAERDNDLSEEELKEVARKVGIGAVKYADLSKNRTTDYMFNWDSMLSFEGNTAPYLQYAYTRVKSLFRKAGVDMATMPVDIKLVEKQEHALAVLLMQFEEVIGMVSREATPHVLCTYLYDVASAFMTFYEACPMLKEGIEPQVRDSRLALSALVAKTLEKGLTLLGIETLEKM</sequence>
<name>SYR_ALTMD</name>
<keyword id="KW-0030">Aminoacyl-tRNA synthetase</keyword>
<keyword id="KW-0067">ATP-binding</keyword>
<keyword id="KW-0963">Cytoplasm</keyword>
<keyword id="KW-0436">Ligase</keyword>
<keyword id="KW-0547">Nucleotide-binding</keyword>
<keyword id="KW-0648">Protein biosynthesis</keyword>
<comment type="catalytic activity">
    <reaction evidence="1">
        <text>tRNA(Arg) + L-arginine + ATP = L-arginyl-tRNA(Arg) + AMP + diphosphate</text>
        <dbReference type="Rhea" id="RHEA:20301"/>
        <dbReference type="Rhea" id="RHEA-COMP:9658"/>
        <dbReference type="Rhea" id="RHEA-COMP:9673"/>
        <dbReference type="ChEBI" id="CHEBI:30616"/>
        <dbReference type="ChEBI" id="CHEBI:32682"/>
        <dbReference type="ChEBI" id="CHEBI:33019"/>
        <dbReference type="ChEBI" id="CHEBI:78442"/>
        <dbReference type="ChEBI" id="CHEBI:78513"/>
        <dbReference type="ChEBI" id="CHEBI:456215"/>
        <dbReference type="EC" id="6.1.1.19"/>
    </reaction>
</comment>
<comment type="subunit">
    <text evidence="1">Monomer.</text>
</comment>
<comment type="subcellular location">
    <subcellularLocation>
        <location evidence="1">Cytoplasm</location>
    </subcellularLocation>
</comment>
<comment type="similarity">
    <text evidence="1">Belongs to the class-I aminoacyl-tRNA synthetase family.</text>
</comment>
<evidence type="ECO:0000255" key="1">
    <source>
        <dbReference type="HAMAP-Rule" id="MF_00123"/>
    </source>
</evidence>
<proteinExistence type="inferred from homology"/>